<organism>
    <name type="scientific">Miopithecus talapoin</name>
    <name type="common">Angolan talapoin</name>
    <name type="synonym">Cercopithecus talapoin</name>
    <dbReference type="NCBI Taxonomy" id="36231"/>
    <lineage>
        <taxon>Eukaryota</taxon>
        <taxon>Metazoa</taxon>
        <taxon>Chordata</taxon>
        <taxon>Craniata</taxon>
        <taxon>Vertebrata</taxon>
        <taxon>Euteleostomi</taxon>
        <taxon>Mammalia</taxon>
        <taxon>Eutheria</taxon>
        <taxon>Euarchontoglires</taxon>
        <taxon>Primates</taxon>
        <taxon>Haplorrhini</taxon>
        <taxon>Catarrhini</taxon>
        <taxon>Cercopithecidae</taxon>
        <taxon>Cercopithecinae</taxon>
        <taxon>Miopithecus</taxon>
    </lineage>
</organism>
<keyword id="KW-1003">Cell membrane</keyword>
<keyword id="KW-0297">G-protein coupled receptor</keyword>
<keyword id="KW-0325">Glycoprotein</keyword>
<keyword id="KW-0449">Lipoprotein</keyword>
<keyword id="KW-0472">Membrane</keyword>
<keyword id="KW-0564">Palmitate</keyword>
<keyword id="KW-0675">Receptor</keyword>
<keyword id="KW-0807">Transducer</keyword>
<keyword id="KW-0812">Transmembrane</keyword>
<keyword id="KW-1133">Transmembrane helix</keyword>
<feature type="chain" id="PRO_0000069833" description="Melanocyte-stimulating hormone receptor">
    <location>
        <begin position="1"/>
        <end position="317"/>
    </location>
</feature>
<feature type="topological domain" description="Extracellular" evidence="2">
    <location>
        <begin position="1"/>
        <end position="37"/>
    </location>
</feature>
<feature type="transmembrane region" description="Helical; Name=1" evidence="2">
    <location>
        <begin position="38"/>
        <end position="63"/>
    </location>
</feature>
<feature type="topological domain" description="Cytoplasmic" evidence="2">
    <location>
        <begin position="64"/>
        <end position="72"/>
    </location>
</feature>
<feature type="transmembrane region" description="Helical; Name=2" evidence="2">
    <location>
        <begin position="73"/>
        <end position="93"/>
    </location>
</feature>
<feature type="topological domain" description="Extracellular" evidence="2">
    <location>
        <begin position="94"/>
        <end position="118"/>
    </location>
</feature>
<feature type="transmembrane region" description="Helical; Name=3" evidence="2">
    <location>
        <begin position="119"/>
        <end position="140"/>
    </location>
</feature>
<feature type="topological domain" description="Cytoplasmic" evidence="2">
    <location>
        <begin position="141"/>
        <end position="163"/>
    </location>
</feature>
<feature type="transmembrane region" description="Helical; Name=4" evidence="2">
    <location>
        <begin position="164"/>
        <end position="183"/>
    </location>
</feature>
<feature type="topological domain" description="Extracellular" evidence="2">
    <location>
        <begin position="184"/>
        <end position="191"/>
    </location>
</feature>
<feature type="transmembrane region" description="Helical; Name=5" evidence="2">
    <location>
        <begin position="192"/>
        <end position="211"/>
    </location>
</feature>
<feature type="topological domain" description="Cytoplasmic" evidence="2">
    <location>
        <begin position="212"/>
        <end position="240"/>
    </location>
</feature>
<feature type="transmembrane region" description="Helical; Name=6" evidence="2">
    <location>
        <begin position="241"/>
        <end position="266"/>
    </location>
</feature>
<feature type="topological domain" description="Extracellular" evidence="2">
    <location>
        <begin position="267"/>
        <end position="279"/>
    </location>
</feature>
<feature type="transmembrane region" description="Helical; Name=7" evidence="2">
    <location>
        <begin position="280"/>
        <end position="300"/>
    </location>
</feature>
<feature type="topological domain" description="Cytoplasmic" evidence="2">
    <location>
        <begin position="301"/>
        <end position="317"/>
    </location>
</feature>
<feature type="lipid moiety-binding region" description="S-palmitoyl cysteine" evidence="2">
    <location>
        <position position="315"/>
    </location>
</feature>
<feature type="glycosylation site" description="N-linked (GlcNAc...) asparagine" evidence="2">
    <location>
        <position position="29"/>
    </location>
</feature>
<protein>
    <recommendedName>
        <fullName>Melanocyte-stimulating hormone receptor</fullName>
        <shortName>MSH-R</shortName>
    </recommendedName>
    <alternativeName>
        <fullName>Melanocortin receptor 1</fullName>
        <shortName>MC1-R</shortName>
    </alternativeName>
</protein>
<sequence length="317" mass="34765">MPVQGSQRRLLGSLNSTPTATPHLGLAANQTGARCLEVSIPDGLFLSLGLVSLVENVLVVTAIAKNRNLHSPMYCFICCLALSDLLVSGSNMLETAVTLLLEAGALAARAAVVQQLDNVIDVITCSSMLSSLCFLGAIAVDRYISIFYALRYHSIVTLPRARRAVAAIWVASVLFSMLFIAYYDHAAVLLCLVVFFLAMLVLMAVLYVHMLARACQHAQGIARLHKRQRPAHQGFGLKGAATLTILLGIFFLCWGPFFLHLTLIVLCPQHPTCSCIFKNFNLFLALIICNAIIDPLIYAFRSQELRRTLKEVLLCSW</sequence>
<gene>
    <name type="primary">MC1R</name>
</gene>
<dbReference type="EMBL" id="AY205093">
    <property type="protein sequence ID" value="AAP30967.1"/>
    <property type="molecule type" value="Genomic_DNA"/>
</dbReference>
<dbReference type="SMR" id="Q864K4"/>
<dbReference type="GlyCosmos" id="Q864K4">
    <property type="glycosylation" value="1 site, No reported glycans"/>
</dbReference>
<dbReference type="GO" id="GO:0005886">
    <property type="term" value="C:plasma membrane"/>
    <property type="evidence" value="ECO:0000250"/>
    <property type="project" value="UniProtKB"/>
</dbReference>
<dbReference type="GO" id="GO:0004980">
    <property type="term" value="F:melanocyte-stimulating hormone receptor activity"/>
    <property type="evidence" value="ECO:0007669"/>
    <property type="project" value="InterPro"/>
</dbReference>
<dbReference type="GO" id="GO:0007189">
    <property type="term" value="P:adenylate cyclase-activating G protein-coupled receptor signaling pathway"/>
    <property type="evidence" value="ECO:0007669"/>
    <property type="project" value="UniProtKB-ARBA"/>
</dbReference>
<dbReference type="CDD" id="cd15351">
    <property type="entry name" value="7tmA_MC1R"/>
    <property type="match status" value="1"/>
</dbReference>
<dbReference type="FunFam" id="1.20.1070.10:FF:000211">
    <property type="entry name" value="Melanocyte-stimulating hormone receptor"/>
    <property type="match status" value="1"/>
</dbReference>
<dbReference type="Gene3D" id="1.20.1070.10">
    <property type="entry name" value="Rhodopsin 7-helix transmembrane proteins"/>
    <property type="match status" value="1"/>
</dbReference>
<dbReference type="InterPro" id="IPR000276">
    <property type="entry name" value="GPCR_Rhodpsn"/>
</dbReference>
<dbReference type="InterPro" id="IPR017452">
    <property type="entry name" value="GPCR_Rhodpsn_7TM"/>
</dbReference>
<dbReference type="InterPro" id="IPR001671">
    <property type="entry name" value="Melcrt_ACTH_rcpt"/>
</dbReference>
<dbReference type="InterPro" id="IPR000761">
    <property type="entry name" value="MSH_rcpt"/>
</dbReference>
<dbReference type="PANTHER" id="PTHR22750">
    <property type="entry name" value="G-PROTEIN COUPLED RECEPTOR"/>
    <property type="match status" value="1"/>
</dbReference>
<dbReference type="Pfam" id="PF00001">
    <property type="entry name" value="7tm_1"/>
    <property type="match status" value="1"/>
</dbReference>
<dbReference type="PRINTS" id="PR00237">
    <property type="entry name" value="GPCRRHODOPSN"/>
</dbReference>
<dbReference type="PRINTS" id="PR00534">
    <property type="entry name" value="MCRFAMILY"/>
</dbReference>
<dbReference type="PRINTS" id="PR00536">
    <property type="entry name" value="MELNOCYTESHR"/>
</dbReference>
<dbReference type="SMART" id="SM01381">
    <property type="entry name" value="7TM_GPCR_Srsx"/>
    <property type="match status" value="1"/>
</dbReference>
<dbReference type="SUPFAM" id="SSF81321">
    <property type="entry name" value="Family A G protein-coupled receptor-like"/>
    <property type="match status" value="1"/>
</dbReference>
<dbReference type="PROSITE" id="PS00237">
    <property type="entry name" value="G_PROTEIN_RECEP_F1_1"/>
    <property type="match status" value="1"/>
</dbReference>
<dbReference type="PROSITE" id="PS50262">
    <property type="entry name" value="G_PROTEIN_RECEP_F1_2"/>
    <property type="match status" value="1"/>
</dbReference>
<proteinExistence type="inferred from homology"/>
<reference key="1">
    <citation type="journal article" date="2003" name="Am. J. Phys. Anthropol.">
        <title>Evolution of a pigmentation gene, the melanocortin-1 receptor, in primates.</title>
        <authorList>
            <person name="Mundy N.I."/>
            <person name="Kelly J."/>
        </authorList>
    </citation>
    <scope>NUCLEOTIDE SEQUENCE [GENOMIC DNA]</scope>
    <source>
        <strain>Isolate 1</strain>
    </source>
</reference>
<name>MSHR_MIOTA</name>
<accession>Q864K4</accession>
<evidence type="ECO:0000250" key="1">
    <source>
        <dbReference type="UniProtKB" id="Q01726"/>
    </source>
</evidence>
<evidence type="ECO:0000255" key="2"/>
<evidence type="ECO:0000255" key="3">
    <source>
        <dbReference type="PROSITE-ProRule" id="PRU00521"/>
    </source>
</evidence>
<comment type="function">
    <text evidence="1">Receptor for MSH (alpha, beta and gamma) and ACTH. The activity of this receptor is mediated by G proteins which activate adenylate cyclase. Mediates melanogenesis, the production of eumelanin (black/brown) and phaeomelanin (red/yellow), via regulation of cAMP signaling in melanocytes.</text>
</comment>
<comment type="subunit">
    <text evidence="1">Interacts with MGRN1, but does not undergo MGRN1-mediated ubiquitination; this interaction competes with GNAS-binding and thus inhibits agonist-induced cAMP production. Interacts with OPN3; the interaction results in a decrease in MC1R-mediated cAMP signaling and ultimately a decrease in melanin production in melanocytes.</text>
</comment>
<comment type="subcellular location">
    <subcellularLocation>
        <location evidence="1">Cell membrane</location>
        <topology evidence="2">Multi-pass membrane protein</topology>
    </subcellularLocation>
</comment>
<comment type="similarity">
    <text evidence="3">Belongs to the G-protein coupled receptor 1 family.</text>
</comment>